<protein>
    <recommendedName>
        <fullName evidence="1">Cell division protein ZapB</fullName>
    </recommendedName>
</protein>
<organism>
    <name type="scientific">Salmonella newport (strain SL254)</name>
    <dbReference type="NCBI Taxonomy" id="423368"/>
    <lineage>
        <taxon>Bacteria</taxon>
        <taxon>Pseudomonadati</taxon>
        <taxon>Pseudomonadota</taxon>
        <taxon>Gammaproteobacteria</taxon>
        <taxon>Enterobacterales</taxon>
        <taxon>Enterobacteriaceae</taxon>
        <taxon>Salmonella</taxon>
    </lineage>
</organism>
<gene>
    <name evidence="1" type="primary">zapB</name>
    <name type="ordered locus">SNSL254_A4417</name>
</gene>
<dbReference type="EMBL" id="CP001113">
    <property type="protein sequence ID" value="ACF63556.1"/>
    <property type="molecule type" value="Genomic_DNA"/>
</dbReference>
<dbReference type="RefSeq" id="WP_000051370.1">
    <property type="nucleotide sequence ID" value="NZ_CCMR01000001.1"/>
</dbReference>
<dbReference type="SMR" id="B4T0T4"/>
<dbReference type="KEGG" id="see:SNSL254_A4417"/>
<dbReference type="HOGENOM" id="CLU_171174_2_0_6"/>
<dbReference type="Proteomes" id="UP000008824">
    <property type="component" value="Chromosome"/>
</dbReference>
<dbReference type="GO" id="GO:0005737">
    <property type="term" value="C:cytoplasm"/>
    <property type="evidence" value="ECO:0007669"/>
    <property type="project" value="UniProtKB-SubCell"/>
</dbReference>
<dbReference type="GO" id="GO:0000917">
    <property type="term" value="P:division septum assembly"/>
    <property type="evidence" value="ECO:0007669"/>
    <property type="project" value="UniProtKB-KW"/>
</dbReference>
<dbReference type="GO" id="GO:0043093">
    <property type="term" value="P:FtsZ-dependent cytokinesis"/>
    <property type="evidence" value="ECO:0007669"/>
    <property type="project" value="UniProtKB-UniRule"/>
</dbReference>
<dbReference type="FunFam" id="1.20.5.340:FF:000014">
    <property type="entry name" value="Cell division protein ZapB"/>
    <property type="match status" value="1"/>
</dbReference>
<dbReference type="Gene3D" id="1.20.5.340">
    <property type="match status" value="1"/>
</dbReference>
<dbReference type="HAMAP" id="MF_01196">
    <property type="entry name" value="ZapB"/>
    <property type="match status" value="1"/>
</dbReference>
<dbReference type="InterPro" id="IPR009252">
    <property type="entry name" value="Cell_div_ZapB"/>
</dbReference>
<dbReference type="NCBIfam" id="NF011951">
    <property type="entry name" value="PRK15422.1"/>
    <property type="match status" value="1"/>
</dbReference>
<dbReference type="Pfam" id="PF06005">
    <property type="entry name" value="ZapB"/>
    <property type="match status" value="1"/>
</dbReference>
<feature type="chain" id="PRO_1000138448" description="Cell division protein ZapB">
    <location>
        <begin position="1"/>
        <end position="79"/>
    </location>
</feature>
<feature type="region of interest" description="Disordered" evidence="2">
    <location>
        <begin position="36"/>
        <end position="63"/>
    </location>
</feature>
<feature type="coiled-coil region" evidence="1">
    <location>
        <begin position="3"/>
        <end position="79"/>
    </location>
</feature>
<feature type="compositionally biased region" description="Polar residues" evidence="2">
    <location>
        <begin position="36"/>
        <end position="45"/>
    </location>
</feature>
<feature type="compositionally biased region" description="Basic and acidic residues" evidence="2">
    <location>
        <begin position="46"/>
        <end position="57"/>
    </location>
</feature>
<proteinExistence type="inferred from homology"/>
<sequence>MSLEVFEKLEAKVQQAIDTITLLQMEIEELKEKNNSLTQEVQSAQHQREELERENNSLKEQQSGWQERLQALLGRMEEV</sequence>
<comment type="function">
    <text evidence="1">Non-essential, abundant cell division factor that is required for proper Z-ring formation. It is recruited early to the divisome by direct interaction with FtsZ, stimulating Z-ring assembly and thereby promoting cell division earlier in the cell cycle. Its recruitment to the Z-ring requires functional FtsA or ZipA.</text>
</comment>
<comment type="subunit">
    <text evidence="1">Homodimer. The ends of the coiled-coil dimer bind to each other, forming polymers. Interacts with FtsZ.</text>
</comment>
<comment type="subcellular location">
    <subcellularLocation>
        <location evidence="1">Cytoplasm</location>
    </subcellularLocation>
    <text evidence="1">Localizes to the septum at mid-cell, in a FtsZ-like pattern.</text>
</comment>
<comment type="similarity">
    <text evidence="1">Belongs to the ZapB family.</text>
</comment>
<keyword id="KW-0131">Cell cycle</keyword>
<keyword id="KW-0132">Cell division</keyword>
<keyword id="KW-0175">Coiled coil</keyword>
<keyword id="KW-0963">Cytoplasm</keyword>
<keyword id="KW-0717">Septation</keyword>
<reference key="1">
    <citation type="journal article" date="2011" name="J. Bacteriol.">
        <title>Comparative genomics of 28 Salmonella enterica isolates: evidence for CRISPR-mediated adaptive sublineage evolution.</title>
        <authorList>
            <person name="Fricke W.F."/>
            <person name="Mammel M.K."/>
            <person name="McDermott P.F."/>
            <person name="Tartera C."/>
            <person name="White D.G."/>
            <person name="Leclerc J.E."/>
            <person name="Ravel J."/>
            <person name="Cebula T.A."/>
        </authorList>
    </citation>
    <scope>NUCLEOTIDE SEQUENCE [LARGE SCALE GENOMIC DNA]</scope>
    <source>
        <strain>SL254</strain>
    </source>
</reference>
<name>ZAPB_SALNS</name>
<evidence type="ECO:0000255" key="1">
    <source>
        <dbReference type="HAMAP-Rule" id="MF_01196"/>
    </source>
</evidence>
<evidence type="ECO:0000256" key="2">
    <source>
        <dbReference type="SAM" id="MobiDB-lite"/>
    </source>
</evidence>
<accession>B4T0T4</accession>